<feature type="chain" id="PRO_0000255746" description="ADP-L-glycero-D-manno-heptose-6-epimerase">
    <location>
        <begin position="1"/>
        <end position="332"/>
    </location>
</feature>
<feature type="active site" description="Proton acceptor" evidence="1">
    <location>
        <position position="142"/>
    </location>
</feature>
<feature type="active site" description="Proton acceptor" evidence="1">
    <location>
        <position position="180"/>
    </location>
</feature>
<feature type="binding site" evidence="1">
    <location>
        <begin position="13"/>
        <end position="14"/>
    </location>
    <ligand>
        <name>NADP(+)</name>
        <dbReference type="ChEBI" id="CHEBI:58349"/>
    </ligand>
</feature>
<feature type="binding site" evidence="1">
    <location>
        <begin position="34"/>
        <end position="35"/>
    </location>
    <ligand>
        <name>NADP(+)</name>
        <dbReference type="ChEBI" id="CHEBI:58349"/>
    </ligand>
</feature>
<feature type="binding site" evidence="1">
    <location>
        <position position="41"/>
    </location>
    <ligand>
        <name>NADP(+)</name>
        <dbReference type="ChEBI" id="CHEBI:58349"/>
    </ligand>
</feature>
<feature type="binding site" evidence="1">
    <location>
        <position position="56"/>
    </location>
    <ligand>
        <name>NADP(+)</name>
        <dbReference type="ChEBI" id="CHEBI:58349"/>
    </ligand>
</feature>
<feature type="binding site" evidence="1">
    <location>
        <begin position="78"/>
        <end position="82"/>
    </location>
    <ligand>
        <name>NADP(+)</name>
        <dbReference type="ChEBI" id="CHEBI:58349"/>
    </ligand>
</feature>
<feature type="binding site" evidence="1">
    <location>
        <position position="95"/>
    </location>
    <ligand>
        <name>NADP(+)</name>
        <dbReference type="ChEBI" id="CHEBI:58349"/>
    </ligand>
</feature>
<feature type="binding site" evidence="1">
    <location>
        <position position="146"/>
    </location>
    <ligand>
        <name>NADP(+)</name>
        <dbReference type="ChEBI" id="CHEBI:58349"/>
    </ligand>
</feature>
<feature type="binding site" evidence="1">
    <location>
        <position position="171"/>
    </location>
    <ligand>
        <name>substrate</name>
    </ligand>
</feature>
<feature type="binding site" evidence="1">
    <location>
        <position position="172"/>
    </location>
    <ligand>
        <name>NADP(+)</name>
        <dbReference type="ChEBI" id="CHEBI:58349"/>
    </ligand>
</feature>
<feature type="binding site" evidence="1">
    <location>
        <position position="180"/>
    </location>
    <ligand>
        <name>NADP(+)</name>
        <dbReference type="ChEBI" id="CHEBI:58349"/>
    </ligand>
</feature>
<feature type="binding site" evidence="1">
    <location>
        <position position="182"/>
    </location>
    <ligand>
        <name>substrate</name>
    </ligand>
</feature>
<feature type="binding site" evidence="1">
    <location>
        <position position="189"/>
    </location>
    <ligand>
        <name>substrate</name>
    </ligand>
</feature>
<feature type="binding site" evidence="1">
    <location>
        <begin position="203"/>
        <end position="206"/>
    </location>
    <ligand>
        <name>substrate</name>
    </ligand>
</feature>
<feature type="binding site" evidence="1">
    <location>
        <position position="216"/>
    </location>
    <ligand>
        <name>substrate</name>
    </ligand>
</feature>
<feature type="binding site" evidence="1">
    <location>
        <position position="295"/>
    </location>
    <ligand>
        <name>substrate</name>
    </ligand>
</feature>
<reference key="1">
    <citation type="journal article" date="2006" name="J. Bacteriol.">
        <title>The genome sequence of the obligately chemolithoautotrophic, facultatively anaerobic bacterium Thiobacillus denitrificans.</title>
        <authorList>
            <person name="Beller H.R."/>
            <person name="Chain P.S."/>
            <person name="Letain T.E."/>
            <person name="Chakicherla A."/>
            <person name="Larimer F.W."/>
            <person name="Richardson P.M."/>
            <person name="Coleman M.A."/>
            <person name="Wood A.P."/>
            <person name="Kelly D.P."/>
        </authorList>
    </citation>
    <scope>NUCLEOTIDE SEQUENCE [LARGE SCALE GENOMIC DNA]</scope>
    <source>
        <strain>ATCC 25259 / T1</strain>
    </source>
</reference>
<name>HLDD_THIDA</name>
<dbReference type="EC" id="5.1.3.20" evidence="1"/>
<dbReference type="EMBL" id="CP000116">
    <property type="protein sequence ID" value="AAZ96916.1"/>
    <property type="molecule type" value="Genomic_DNA"/>
</dbReference>
<dbReference type="RefSeq" id="WP_011311475.1">
    <property type="nucleotide sequence ID" value="NC_007404.1"/>
</dbReference>
<dbReference type="SMR" id="Q3SK74"/>
<dbReference type="STRING" id="292415.Tbd_0963"/>
<dbReference type="KEGG" id="tbd:Tbd_0963"/>
<dbReference type="eggNOG" id="COG0451">
    <property type="taxonomic scope" value="Bacteria"/>
</dbReference>
<dbReference type="HOGENOM" id="CLU_007383_1_3_4"/>
<dbReference type="OrthoDB" id="9803010at2"/>
<dbReference type="UniPathway" id="UPA00356">
    <property type="reaction ID" value="UER00440"/>
</dbReference>
<dbReference type="Proteomes" id="UP000008291">
    <property type="component" value="Chromosome"/>
</dbReference>
<dbReference type="GO" id="GO:0008712">
    <property type="term" value="F:ADP-glyceromanno-heptose 6-epimerase activity"/>
    <property type="evidence" value="ECO:0007669"/>
    <property type="project" value="UniProtKB-UniRule"/>
</dbReference>
<dbReference type="GO" id="GO:0050661">
    <property type="term" value="F:NADP binding"/>
    <property type="evidence" value="ECO:0007669"/>
    <property type="project" value="InterPro"/>
</dbReference>
<dbReference type="GO" id="GO:0097171">
    <property type="term" value="P:ADP-L-glycero-beta-D-manno-heptose biosynthetic process"/>
    <property type="evidence" value="ECO:0007669"/>
    <property type="project" value="UniProtKB-UniPathway"/>
</dbReference>
<dbReference type="GO" id="GO:0005975">
    <property type="term" value="P:carbohydrate metabolic process"/>
    <property type="evidence" value="ECO:0007669"/>
    <property type="project" value="UniProtKB-UniRule"/>
</dbReference>
<dbReference type="CDD" id="cd05248">
    <property type="entry name" value="ADP_GME_SDR_e"/>
    <property type="match status" value="1"/>
</dbReference>
<dbReference type="Gene3D" id="3.40.50.720">
    <property type="entry name" value="NAD(P)-binding Rossmann-like Domain"/>
    <property type="match status" value="1"/>
</dbReference>
<dbReference type="Gene3D" id="3.90.25.10">
    <property type="entry name" value="UDP-galactose 4-epimerase, domain 1"/>
    <property type="match status" value="1"/>
</dbReference>
<dbReference type="HAMAP" id="MF_01601">
    <property type="entry name" value="Heptose_epimerase"/>
    <property type="match status" value="1"/>
</dbReference>
<dbReference type="InterPro" id="IPR001509">
    <property type="entry name" value="Epimerase_deHydtase"/>
</dbReference>
<dbReference type="InterPro" id="IPR011912">
    <property type="entry name" value="Heptose_epim"/>
</dbReference>
<dbReference type="InterPro" id="IPR036291">
    <property type="entry name" value="NAD(P)-bd_dom_sf"/>
</dbReference>
<dbReference type="NCBIfam" id="TIGR02197">
    <property type="entry name" value="heptose_epim"/>
    <property type="match status" value="1"/>
</dbReference>
<dbReference type="PANTHER" id="PTHR43103:SF3">
    <property type="entry name" value="ADP-L-GLYCERO-D-MANNO-HEPTOSE-6-EPIMERASE"/>
    <property type="match status" value="1"/>
</dbReference>
<dbReference type="PANTHER" id="PTHR43103">
    <property type="entry name" value="NUCLEOSIDE-DIPHOSPHATE-SUGAR EPIMERASE"/>
    <property type="match status" value="1"/>
</dbReference>
<dbReference type="Pfam" id="PF01370">
    <property type="entry name" value="Epimerase"/>
    <property type="match status" value="1"/>
</dbReference>
<dbReference type="SUPFAM" id="SSF51735">
    <property type="entry name" value="NAD(P)-binding Rossmann-fold domains"/>
    <property type="match status" value="1"/>
</dbReference>
<proteinExistence type="inferred from homology"/>
<accession>Q3SK74</accession>
<keyword id="KW-0119">Carbohydrate metabolism</keyword>
<keyword id="KW-0413">Isomerase</keyword>
<keyword id="KW-0521">NADP</keyword>
<keyword id="KW-1185">Reference proteome</keyword>
<protein>
    <recommendedName>
        <fullName evidence="1">ADP-L-glycero-D-manno-heptose-6-epimerase</fullName>
        <ecNumber evidence="1">5.1.3.20</ecNumber>
    </recommendedName>
    <alternativeName>
        <fullName evidence="1">ADP-L-glycero-beta-D-manno-heptose-6-epimerase</fullName>
        <shortName evidence="1">ADP-glyceromanno-heptose 6-epimerase</shortName>
        <shortName evidence="1">ADP-hep 6-epimerase</shortName>
        <shortName evidence="1">AGME</shortName>
    </alternativeName>
</protein>
<gene>
    <name evidence="1" type="primary">hldD</name>
    <name type="ordered locus">Tbd_0963</name>
</gene>
<organism>
    <name type="scientific">Thiobacillus denitrificans (strain ATCC 25259 / T1)</name>
    <dbReference type="NCBI Taxonomy" id="292415"/>
    <lineage>
        <taxon>Bacteria</taxon>
        <taxon>Pseudomonadati</taxon>
        <taxon>Pseudomonadota</taxon>
        <taxon>Betaproteobacteria</taxon>
        <taxon>Nitrosomonadales</taxon>
        <taxon>Thiobacillaceae</taxon>
        <taxon>Thiobacillus</taxon>
    </lineage>
</organism>
<sequence>MSQYTVVTGAAGFIGANIVKALNERGETNIIAVDNLTKADKFKNLTDCEIADYLDKTEFLSVVEEGVLDGSVAAIFHEGACSDTMETDGRYMMDNNYRYSGALLKFCQDEGAQFLYASSASVYGSGRVFSESRECESPLNVYGYSKFLFDQSVRRLWAERTAQIAGFRYFNVYGPREQHKGRMASVAFHFFNQYRAEGRVKLFEGCDGYPNGEQRRDFVSVEDVVRVNMWFLDHPEVSGIFNVGTGRCQSFNDVAVATVNACRAAEGQDALTLDEMQAQGLIGYVAFPEALKGKYQSYTEADTAALRRAGYDGSFYSVEEGTARYIERLLQS</sequence>
<evidence type="ECO:0000255" key="1">
    <source>
        <dbReference type="HAMAP-Rule" id="MF_01601"/>
    </source>
</evidence>
<comment type="function">
    <text evidence="1">Catalyzes the interconversion between ADP-D-glycero-beta-D-manno-heptose and ADP-L-glycero-beta-D-manno-heptose via an epimerization at carbon 6 of the heptose.</text>
</comment>
<comment type="catalytic activity">
    <reaction evidence="1">
        <text>ADP-D-glycero-beta-D-manno-heptose = ADP-L-glycero-beta-D-manno-heptose</text>
        <dbReference type="Rhea" id="RHEA:17577"/>
        <dbReference type="ChEBI" id="CHEBI:59967"/>
        <dbReference type="ChEBI" id="CHEBI:61506"/>
        <dbReference type="EC" id="5.1.3.20"/>
    </reaction>
</comment>
<comment type="cofactor">
    <cofactor evidence="1">
        <name>NADP(+)</name>
        <dbReference type="ChEBI" id="CHEBI:58349"/>
    </cofactor>
    <text evidence="1">Binds 1 NADP(+) per subunit.</text>
</comment>
<comment type="pathway">
    <text evidence="1">Nucleotide-sugar biosynthesis; ADP-L-glycero-beta-D-manno-heptose biosynthesis; ADP-L-glycero-beta-D-manno-heptose from D-glycero-beta-D-manno-heptose 7-phosphate: step 4/4.</text>
</comment>
<comment type="subunit">
    <text evidence="1">Homopentamer.</text>
</comment>
<comment type="domain">
    <text evidence="1">Contains a large N-terminal NADP-binding domain, and a smaller C-terminal substrate-binding domain.</text>
</comment>
<comment type="similarity">
    <text evidence="1">Belongs to the NAD(P)-dependent epimerase/dehydratase family. HldD subfamily.</text>
</comment>